<proteinExistence type="evidence at transcript level"/>
<sequence>MDALRKLGSLGRRRDEVDTASSPLKNEASAAEIPRDPVQISGKDEASPSGLTPIRVRVPEDVRSESEVKRDGDEESVGSGESFDSALERMEASSITSFEPPSPMESIDGRFQFEDGVREDLAESGLDGNFSYDDDDDDEEEEEDGSEEGESTSSSIINSEYSSSASNTEDEMDISGYGASSARTMLVSNDASKSDEEAIDEPKYKLRNVVTGEENMSGGLSVENEARGVALSSWKSELEDFYEASLEDNDVQEELAEKIIKVASEQNDEEDEEVHFPVIANELPGRITRNRTMIDSPAHLYSAVKAVDSTLPALKSESTKSITQGFVEAEEAESDVFTEGEDGYDDEDEDGDIQMDVSQATEKSGTPDESESNPSMGAGGPRLPSLPQRSSARRSAATTATGVPRPNTASSTQSAATSDASISSESSEANEIREKLQNIRIKFLRLARRLNQSPQNVVVAQVLYRLGLAESLRGGSSLNRTRAFSFDHANALAEEQEAAKYEDLDFACTILVLGKTGVGKSATINSIFDECKTVTSAYYPSTTKVHEVSGTVLGVKVRFIDTPGLLPSTADQRHNKNIMRQVKKYIKKVSPDIVLYFDRMDMQTRDSGDVPLLRTITDVFGAAVWFNATVVLTHASKAPPDGSNGTPMSYDYFVAQRSHFVQQTIRQAAGDARLQNPVSLVENHPACRINRSGQRVLPNGQPWKQQLLLLCFASKILAEANTLLKLQEASTPGKPFGQRSRVPPLPYLLSSLLQSRAQLKMPDEQHGESEDSDDDSDEEDEEEGDEYDDLPPFRPLSKQELEDLSKEQRQEYAEELADRERLFQKKQYREQIRRRRERKKQASVMSKEEPSIPGDGAEDESGQPATVAVPMPDMALPPSFDSDNPTHRYRYLETANQWLVRPVLETHGWDHDAGYDGFNVEKMFVVKEKIPASVSGQVTKDKKEAQVNFEAAASLRHGEGKVTLTGFDVQTIGKDLAYTVRAETRFNNFKRNKTTAGVTATYLNDTIAAGVKLEDRVLIGKRVKLVVNGGVLTGKGDKAYGGSLEATLRGKEYPLSRTLSTLGLSVMDWHGDLAIGGNLQSQFMVGKTMMVGRANLNNRGSGQVSIRASSSEQLQMVLIGIVPILRSLINCRFGFGGQPQQ</sequence>
<evidence type="ECO:0000250" key="1">
    <source>
        <dbReference type="UniProtKB" id="O23680"/>
    </source>
</evidence>
<evidence type="ECO:0000255" key="2"/>
<evidence type="ECO:0000255" key="3">
    <source>
        <dbReference type="PROSITE-ProRule" id="PRU01057"/>
    </source>
</evidence>
<evidence type="ECO:0000256" key="4">
    <source>
        <dbReference type="SAM" id="MobiDB-lite"/>
    </source>
</evidence>
<evidence type="ECO:0000303" key="5">
    <source>
    </source>
</evidence>
<evidence type="ECO:0000305" key="6"/>
<evidence type="ECO:0000305" key="7">
    <source>
    </source>
</evidence>
<evidence type="ECO:0000312" key="8">
    <source>
        <dbReference type="EMBL" id="EDQ63890.1"/>
    </source>
</evidence>
<evidence type="ECO:0000312" key="9">
    <source>
        <dbReference type="EMBL" id="PNR50669.1"/>
    </source>
</evidence>
<dbReference type="EC" id="3.6.5.-" evidence="6"/>
<dbReference type="EMBL" id="AY496562">
    <property type="protein sequence ID" value="AAS47583.1"/>
    <property type="molecule type" value="mRNA"/>
</dbReference>
<dbReference type="EMBL" id="DS545025">
    <property type="protein sequence ID" value="EDQ63890.1"/>
    <property type="molecule type" value="Genomic_DNA"/>
</dbReference>
<dbReference type="EMBL" id="ABEU02000007">
    <property type="protein sequence ID" value="PNR50669.1"/>
    <property type="molecule type" value="Genomic_DNA"/>
</dbReference>
<dbReference type="RefSeq" id="XP_001771330.1">
    <property type="nucleotide sequence ID" value="XM_001771278.1"/>
</dbReference>
<dbReference type="SMR" id="A9SY64"/>
<dbReference type="FunCoup" id="A9SY64">
    <property type="interactions" value="2521"/>
</dbReference>
<dbReference type="STRING" id="3218.A9SY64"/>
<dbReference type="PaxDb" id="3218-PP1S136_59V6.1"/>
<dbReference type="EnsemblPlants" id="Pp3c7_3450V3.1">
    <property type="protein sequence ID" value="Pp3c7_3450V3.1"/>
    <property type="gene ID" value="Pp3c7_3450"/>
</dbReference>
<dbReference type="EnsemblPlants" id="Pp3c7_3450V3.2">
    <property type="protein sequence ID" value="Pp3c7_3450V3.2"/>
    <property type="gene ID" value="Pp3c7_3450"/>
</dbReference>
<dbReference type="Gramene" id="Pp3c7_3450V3.1">
    <property type="protein sequence ID" value="Pp3c7_3450V3.1"/>
    <property type="gene ID" value="Pp3c7_3450"/>
</dbReference>
<dbReference type="Gramene" id="Pp3c7_3450V3.2">
    <property type="protein sequence ID" value="Pp3c7_3450V3.2"/>
    <property type="gene ID" value="Pp3c7_3450"/>
</dbReference>
<dbReference type="eggNOG" id="ENOG502QR60">
    <property type="taxonomic scope" value="Eukaryota"/>
</dbReference>
<dbReference type="HOGENOM" id="CLU_003856_0_0_1"/>
<dbReference type="InParanoid" id="A9SY64"/>
<dbReference type="OrthoDB" id="8954335at2759"/>
<dbReference type="Proteomes" id="UP000006727">
    <property type="component" value="Chromosome 7"/>
</dbReference>
<dbReference type="GO" id="GO:0009707">
    <property type="term" value="C:chloroplast outer membrane"/>
    <property type="evidence" value="ECO:0000318"/>
    <property type="project" value="GO_Central"/>
</dbReference>
<dbReference type="GO" id="GO:0005525">
    <property type="term" value="F:GTP binding"/>
    <property type="evidence" value="ECO:0007669"/>
    <property type="project" value="UniProtKB-KW"/>
</dbReference>
<dbReference type="GO" id="GO:0003924">
    <property type="term" value="F:GTPase activity"/>
    <property type="evidence" value="ECO:0007669"/>
    <property type="project" value="InterPro"/>
</dbReference>
<dbReference type="GO" id="GO:0046872">
    <property type="term" value="F:metal ion binding"/>
    <property type="evidence" value="ECO:0007669"/>
    <property type="project" value="UniProtKB-KW"/>
</dbReference>
<dbReference type="GO" id="GO:0045037">
    <property type="term" value="P:protein import into chloroplast stroma"/>
    <property type="evidence" value="ECO:0000314"/>
    <property type="project" value="UniProtKB"/>
</dbReference>
<dbReference type="GO" id="GO:0045036">
    <property type="term" value="P:protein targeting to chloroplast"/>
    <property type="evidence" value="ECO:0000318"/>
    <property type="project" value="GO_Central"/>
</dbReference>
<dbReference type="CDD" id="cd01853">
    <property type="entry name" value="Toc34_like"/>
    <property type="match status" value="1"/>
</dbReference>
<dbReference type="FunFam" id="3.40.50.300:FF:000413">
    <property type="entry name" value="Translocase of chloroplast 120, chloroplastic"/>
    <property type="match status" value="1"/>
</dbReference>
<dbReference type="Gene3D" id="3.40.50.300">
    <property type="entry name" value="P-loop containing nucleotide triphosphate hydrolases"/>
    <property type="match status" value="1"/>
</dbReference>
<dbReference type="InterPro" id="IPR006703">
    <property type="entry name" value="G_AIG1"/>
</dbReference>
<dbReference type="InterPro" id="IPR045058">
    <property type="entry name" value="GIMA/IAN/Toc"/>
</dbReference>
<dbReference type="InterPro" id="IPR027417">
    <property type="entry name" value="P-loop_NTPase"/>
</dbReference>
<dbReference type="InterPro" id="IPR024283">
    <property type="entry name" value="TOC159_MAD"/>
</dbReference>
<dbReference type="InterPro" id="IPR005690">
    <property type="entry name" value="Toc86_159"/>
</dbReference>
<dbReference type="NCBIfam" id="TIGR00993">
    <property type="entry name" value="3a0901s04IAP86"/>
    <property type="match status" value="1"/>
</dbReference>
<dbReference type="PANTHER" id="PTHR10903">
    <property type="entry name" value="GTPASE, IMAP FAMILY MEMBER-RELATED"/>
    <property type="match status" value="1"/>
</dbReference>
<dbReference type="PANTHER" id="PTHR10903:SF135">
    <property type="entry name" value="TRANSLOCASE OF CHLOROPLAST 120, CHLOROPLASTIC-RELATED"/>
    <property type="match status" value="1"/>
</dbReference>
<dbReference type="Pfam" id="PF04548">
    <property type="entry name" value="AIG1"/>
    <property type="match status" value="1"/>
</dbReference>
<dbReference type="Pfam" id="PF11886">
    <property type="entry name" value="TOC159_MAD"/>
    <property type="match status" value="1"/>
</dbReference>
<dbReference type="SUPFAM" id="SSF52540">
    <property type="entry name" value="P-loop containing nucleoside triphosphate hydrolases"/>
    <property type="match status" value="1"/>
</dbReference>
<dbReference type="PROSITE" id="PS51720">
    <property type="entry name" value="G_AIG1"/>
    <property type="match status" value="1"/>
</dbReference>
<accession>A9SY64</accession>
<accession>Q6RJN8</accession>
<keyword id="KW-0150">Chloroplast</keyword>
<keyword id="KW-0342">GTP-binding</keyword>
<keyword id="KW-0378">Hydrolase</keyword>
<keyword id="KW-0460">Magnesium</keyword>
<keyword id="KW-0472">Membrane</keyword>
<keyword id="KW-0479">Metal-binding</keyword>
<keyword id="KW-0547">Nucleotide-binding</keyword>
<keyword id="KW-0934">Plastid</keyword>
<keyword id="KW-1002">Plastid outer membrane</keyword>
<keyword id="KW-0653">Protein transport</keyword>
<keyword id="KW-1185">Reference proteome</keyword>
<keyword id="KW-0812">Transmembrane</keyword>
<keyword id="KW-1133">Transmembrane helix</keyword>
<keyword id="KW-0813">Transport</keyword>
<comment type="function">
    <text evidence="7">GTPase involved in protein precursor import into chloroplasts (Probable). Seems to recognize chloroplast-destined precursor proteins and regulate their presentation to the translocation channel through GTP hydrolysis (Probable). Probably specialized in the import of nuclear encoded non-photosynthetic preproteins from the cytoplasm to the chloroplast (Probable).</text>
</comment>
<comment type="cofactor">
    <cofactor evidence="1">
        <name>Mg(2+)</name>
        <dbReference type="ChEBI" id="CHEBI:18420"/>
    </cofactor>
    <text evidence="1">Binds 1 Mg(2+) ion by subunit.</text>
</comment>
<comment type="subunit">
    <text evidence="6">Part of the TOC core complex.</text>
</comment>
<comment type="subcellular location">
    <subcellularLocation>
        <location evidence="6">Plastid</location>
        <location evidence="6">Chloroplast outer membrane</location>
        <topology evidence="2">Single-pass membrane protein</topology>
    </subcellularLocation>
</comment>
<comment type="similarity">
    <text evidence="6">Belongs to the TRAFAC class TrmE-Era-EngA-EngB-Septin-like GTPase superfamily. AIG1/Toc34/Toc159-like paraseptin GTPase family. TOC159 subfamily.</text>
</comment>
<reference key="1">
    <citation type="journal article" date="2003" name="Plant Mol. Biol.">
        <title>Physcomitrella patens as a model for the study of chloroplast protein transport: conserved machineries between vascular and non-vascular plants.</title>
        <authorList>
            <person name="Hofmann N.R."/>
            <person name="Theg S.M."/>
        </authorList>
    </citation>
    <scope>NUCLEOTIDE SEQUENCE [MRNA]</scope>
    <scope>FUNCTION</scope>
</reference>
<reference key="2">
    <citation type="journal article" date="2008" name="Science">
        <title>The Physcomitrella genome reveals evolutionary insights into the conquest of land by plants.</title>
        <authorList>
            <person name="Rensing S.A."/>
            <person name="Lang D."/>
            <person name="Zimmer A.D."/>
            <person name="Terry A."/>
            <person name="Salamov A."/>
            <person name="Shapiro H."/>
            <person name="Nishiyama T."/>
            <person name="Perroud P.-F."/>
            <person name="Lindquist E.A."/>
            <person name="Kamisugi Y."/>
            <person name="Tanahashi T."/>
            <person name="Sakakibara K."/>
            <person name="Fujita T."/>
            <person name="Oishi K."/>
            <person name="Shin-I T."/>
            <person name="Kuroki Y."/>
            <person name="Toyoda A."/>
            <person name="Suzuki Y."/>
            <person name="Hashimoto S.-I."/>
            <person name="Yamaguchi K."/>
            <person name="Sugano S."/>
            <person name="Kohara Y."/>
            <person name="Fujiyama A."/>
            <person name="Anterola A."/>
            <person name="Aoki S."/>
            <person name="Ashton N."/>
            <person name="Barbazuk W.B."/>
            <person name="Barker E."/>
            <person name="Bennetzen J.L."/>
            <person name="Blankenship R."/>
            <person name="Cho S.H."/>
            <person name="Dutcher S.K."/>
            <person name="Estelle M."/>
            <person name="Fawcett J.A."/>
            <person name="Gundlach H."/>
            <person name="Hanada K."/>
            <person name="Heyl A."/>
            <person name="Hicks K.A."/>
            <person name="Hughes J."/>
            <person name="Lohr M."/>
            <person name="Mayer K."/>
            <person name="Melkozernov A."/>
            <person name="Murata T."/>
            <person name="Nelson D.R."/>
            <person name="Pils B."/>
            <person name="Prigge M."/>
            <person name="Reiss B."/>
            <person name="Renner T."/>
            <person name="Rombauts S."/>
            <person name="Rushton P.J."/>
            <person name="Sanderfoot A."/>
            <person name="Schween G."/>
            <person name="Shiu S.-H."/>
            <person name="Stueber K."/>
            <person name="Theodoulou F.L."/>
            <person name="Tu H."/>
            <person name="Van de Peer Y."/>
            <person name="Verrier P.J."/>
            <person name="Waters E."/>
            <person name="Wood A."/>
            <person name="Yang L."/>
            <person name="Cove D."/>
            <person name="Cuming A.C."/>
            <person name="Hasebe M."/>
            <person name="Lucas S."/>
            <person name="Mishler B.D."/>
            <person name="Reski R."/>
            <person name="Grigoriev I.V."/>
            <person name="Quatrano R.S."/>
            <person name="Boore J.L."/>
        </authorList>
    </citation>
    <scope>NUCLEOTIDE SEQUENCE [LARGE SCALE GENOMIC DNA]</scope>
    <source>
        <strain>cv. Gransden 2004</strain>
    </source>
</reference>
<reference key="3">
    <citation type="journal article" date="2018" name="Plant J.">
        <title>The Physcomitrella patens chromosome-scale assembly reveals moss genome structure and evolution.</title>
        <authorList>
            <person name="Lang D."/>
            <person name="Ullrich K.K."/>
            <person name="Murat F."/>
            <person name="Fuchs J."/>
            <person name="Jenkins J."/>
            <person name="Haas F.B."/>
            <person name="Piednoel M."/>
            <person name="Gundlach H."/>
            <person name="Van Bel M."/>
            <person name="Meyberg R."/>
            <person name="Vives C."/>
            <person name="Morata J."/>
            <person name="Symeonidi A."/>
            <person name="Hiss M."/>
            <person name="Muchero W."/>
            <person name="Kamisugi Y."/>
            <person name="Saleh O."/>
            <person name="Blanc G."/>
            <person name="Decker E.L."/>
            <person name="van Gessel N."/>
            <person name="Grimwood J."/>
            <person name="Hayes R.D."/>
            <person name="Graham S.W."/>
            <person name="Gunter L.E."/>
            <person name="McDaniel S.F."/>
            <person name="Hoernstein S.N.W."/>
            <person name="Larsson A."/>
            <person name="Li F.W."/>
            <person name="Perroud P.F."/>
            <person name="Phillips J."/>
            <person name="Ranjan P."/>
            <person name="Rokshar D.S."/>
            <person name="Rothfels C.J."/>
            <person name="Schneider L."/>
            <person name="Shu S."/>
            <person name="Stevenson D.W."/>
            <person name="Thummler F."/>
            <person name="Tillich M."/>
            <person name="Villarreal Aguilar J.C."/>
            <person name="Widiez T."/>
            <person name="Wong G.K."/>
            <person name="Wymore A."/>
            <person name="Zhang Y."/>
            <person name="Zimmer A.D."/>
            <person name="Quatrano R.S."/>
            <person name="Mayer K.F.X."/>
            <person name="Goodstein D."/>
            <person name="Casacuberta J.M."/>
            <person name="Vandepoele K."/>
            <person name="Reski R."/>
            <person name="Cuming A.C."/>
            <person name="Tuskan G.A."/>
            <person name="Maumus F."/>
            <person name="Salse J."/>
            <person name="Schmutz J."/>
            <person name="Rensing S.A."/>
        </authorList>
    </citation>
    <scope>NUCLEOTIDE SEQUENCE [LARGE SCALE GENOMIC DNA]</scope>
    <scope>GENOME REANNOTATION</scope>
    <source>
        <strain>cv. Gransden 2004</strain>
    </source>
</reference>
<feature type="chain" id="PRO_0000451563" description="Translocase of chloroplast 125, chloroplastic">
    <location>
        <begin position="1"/>
        <end position="1141"/>
    </location>
</feature>
<feature type="transmembrane region" description="Helical" evidence="2">
    <location>
        <begin position="1116"/>
        <end position="1136"/>
    </location>
</feature>
<feature type="domain" description="AIG1-type G" evidence="3">
    <location>
        <begin position="505"/>
        <end position="734"/>
    </location>
</feature>
<feature type="region of interest" description="Disordered" evidence="4">
    <location>
        <begin position="1"/>
        <end position="177"/>
    </location>
</feature>
<feature type="region of interest" description="Disordered" evidence="4">
    <location>
        <begin position="325"/>
        <end position="431"/>
    </location>
</feature>
<feature type="region of interest" description="G1" evidence="3">
    <location>
        <begin position="514"/>
        <end position="521"/>
    </location>
</feature>
<feature type="region of interest" description="G2" evidence="3">
    <location>
        <begin position="541"/>
        <end position="545"/>
    </location>
</feature>
<feature type="region of interest" description="G3" evidence="3">
    <location>
        <begin position="561"/>
        <end position="564"/>
    </location>
</feature>
<feature type="region of interest" description="G4" evidence="3">
    <location>
        <begin position="633"/>
        <end position="636"/>
    </location>
</feature>
<feature type="region of interest" description="G5" evidence="3">
    <location>
        <begin position="682"/>
        <end position="684"/>
    </location>
</feature>
<feature type="region of interest" description="Disordered" evidence="4">
    <location>
        <begin position="758"/>
        <end position="795"/>
    </location>
</feature>
<feature type="region of interest" description="Disordered" evidence="4">
    <location>
        <begin position="832"/>
        <end position="871"/>
    </location>
</feature>
<feature type="compositionally biased region" description="Basic and acidic residues" evidence="4">
    <location>
        <begin position="57"/>
        <end position="72"/>
    </location>
</feature>
<feature type="compositionally biased region" description="Basic and acidic residues" evidence="4">
    <location>
        <begin position="107"/>
        <end position="121"/>
    </location>
</feature>
<feature type="compositionally biased region" description="Acidic residues" evidence="4">
    <location>
        <begin position="132"/>
        <end position="150"/>
    </location>
</feature>
<feature type="compositionally biased region" description="Low complexity" evidence="4">
    <location>
        <begin position="151"/>
        <end position="167"/>
    </location>
</feature>
<feature type="compositionally biased region" description="Acidic residues" evidence="4">
    <location>
        <begin position="328"/>
        <end position="353"/>
    </location>
</feature>
<feature type="compositionally biased region" description="Low complexity" evidence="4">
    <location>
        <begin position="389"/>
        <end position="401"/>
    </location>
</feature>
<feature type="compositionally biased region" description="Low complexity" evidence="4">
    <location>
        <begin position="408"/>
        <end position="429"/>
    </location>
</feature>
<feature type="compositionally biased region" description="Acidic residues" evidence="4">
    <location>
        <begin position="770"/>
        <end position="789"/>
    </location>
</feature>
<feature type="compositionally biased region" description="Basic residues" evidence="4">
    <location>
        <begin position="832"/>
        <end position="841"/>
    </location>
</feature>
<feature type="binding site" evidence="1">
    <location>
        <begin position="517"/>
        <end position="522"/>
    </location>
    <ligand>
        <name>GTP</name>
        <dbReference type="ChEBI" id="CHEBI:37565"/>
    </ligand>
</feature>
<feature type="binding site" evidence="1">
    <location>
        <position position="521"/>
    </location>
    <ligand>
        <name>Mg(2+)</name>
        <dbReference type="ChEBI" id="CHEBI:18420"/>
    </ligand>
</feature>
<feature type="binding site" evidence="1">
    <location>
        <position position="634"/>
    </location>
    <ligand>
        <name>GTP</name>
        <dbReference type="ChEBI" id="CHEBI:37565"/>
    </ligand>
</feature>
<feature type="binding site" evidence="1">
    <location>
        <begin position="682"/>
        <end position="683"/>
    </location>
    <ligand>
        <name>GTP</name>
        <dbReference type="ChEBI" id="CHEBI:37565"/>
    </ligand>
</feature>
<feature type="sequence conflict" description="In Ref. 1; AAS47583." evidence="6" ref="1">
    <original>E</original>
    <variation>G</variation>
    <location>
        <position position="849"/>
    </location>
</feature>
<gene>
    <name evidence="5" type="primary">TOC125</name>
    <name evidence="9" type="ORF">PHYPA_009855</name>
    <name evidence="8" type="ORF">PHYPADRAFT_216964</name>
</gene>
<protein>
    <recommendedName>
        <fullName evidence="6">Translocase of chloroplast 125, chloroplastic</fullName>
        <shortName evidence="5">PpTOC125</shortName>
        <ecNumber evidence="6">3.6.5.-</ecNumber>
    </recommendedName>
    <alternativeName>
        <fullName evidence="6">125 kDa chloroplast outer envelope protein</fullName>
    </alternativeName>
</protein>
<name>TC125_PHYPA</name>
<organism>
    <name type="scientific">Physcomitrium patens</name>
    <name type="common">Spreading-leaved earth moss</name>
    <name type="synonym">Physcomitrella patens</name>
    <dbReference type="NCBI Taxonomy" id="3218"/>
    <lineage>
        <taxon>Eukaryota</taxon>
        <taxon>Viridiplantae</taxon>
        <taxon>Streptophyta</taxon>
        <taxon>Embryophyta</taxon>
        <taxon>Bryophyta</taxon>
        <taxon>Bryophytina</taxon>
        <taxon>Bryopsida</taxon>
        <taxon>Funariidae</taxon>
        <taxon>Funariales</taxon>
        <taxon>Funariaceae</taxon>
        <taxon>Physcomitrium</taxon>
    </lineage>
</organism>